<accession>Q9CJ85</accession>
<comment type="function">
    <text evidence="1">Part of the Sec protein translocase complex. Interacts with the SecYEG preprotein conducting channel. Has a central role in coupling the hydrolysis of ATP to the transfer of proteins into and across the cell membrane, serving as an ATP-driven molecular motor driving the stepwise translocation of polypeptide chains across the membrane.</text>
</comment>
<comment type="catalytic activity">
    <reaction evidence="1">
        <text>ATP + H2O + cellular proteinSide 1 = ADP + phosphate + cellular proteinSide 2.</text>
        <dbReference type="EC" id="7.4.2.8"/>
    </reaction>
</comment>
<comment type="cofactor">
    <cofactor evidence="1">
        <name>Zn(2+)</name>
        <dbReference type="ChEBI" id="CHEBI:29105"/>
    </cofactor>
    <text evidence="1">May bind 1 zinc ion per subunit.</text>
</comment>
<comment type="subunit">
    <text evidence="1">Monomer and homodimer. Part of the essential Sec protein translocation apparatus which comprises SecA, SecYEG and auxiliary proteins SecDF. Other proteins may also be involved.</text>
</comment>
<comment type="subcellular location">
    <subcellularLocation>
        <location evidence="1">Cell membrane</location>
        <topology evidence="1">Peripheral membrane protein</topology>
        <orientation evidence="1">Cytoplasmic side</orientation>
    </subcellularLocation>
    <subcellularLocation>
        <location evidence="1">Cytoplasm</location>
    </subcellularLocation>
    <text evidence="1">Distribution is 50-50.</text>
</comment>
<comment type="similarity">
    <text evidence="1">Belongs to the SecA family.</text>
</comment>
<evidence type="ECO:0000255" key="1">
    <source>
        <dbReference type="HAMAP-Rule" id="MF_01382"/>
    </source>
</evidence>
<gene>
    <name evidence="1" type="primary">secA</name>
    <name type="ordered locus">LL0115</name>
    <name type="ORF">L033</name>
</gene>
<dbReference type="EC" id="7.4.2.8" evidence="1"/>
<dbReference type="EMBL" id="AE005176">
    <property type="protein sequence ID" value="AAK04213.1"/>
    <property type="molecule type" value="Genomic_DNA"/>
</dbReference>
<dbReference type="PIR" id="C86639">
    <property type="entry name" value="C86639"/>
</dbReference>
<dbReference type="RefSeq" id="NP_266271.1">
    <property type="nucleotide sequence ID" value="NC_002662.1"/>
</dbReference>
<dbReference type="RefSeq" id="WP_010905127.1">
    <property type="nucleotide sequence ID" value="NC_002662.1"/>
</dbReference>
<dbReference type="SMR" id="Q9CJ85"/>
<dbReference type="PaxDb" id="272623-L0334"/>
<dbReference type="EnsemblBacteria" id="AAK04213">
    <property type="protein sequence ID" value="AAK04213"/>
    <property type="gene ID" value="L0334"/>
</dbReference>
<dbReference type="GeneID" id="89632260"/>
<dbReference type="KEGG" id="lla:L0334"/>
<dbReference type="PATRIC" id="fig|272623.7.peg.129"/>
<dbReference type="eggNOG" id="COG0653">
    <property type="taxonomic scope" value="Bacteria"/>
</dbReference>
<dbReference type="HOGENOM" id="CLU_005314_3_0_9"/>
<dbReference type="OrthoDB" id="9805579at2"/>
<dbReference type="Proteomes" id="UP000002196">
    <property type="component" value="Chromosome"/>
</dbReference>
<dbReference type="GO" id="GO:0031522">
    <property type="term" value="C:cell envelope Sec protein transport complex"/>
    <property type="evidence" value="ECO:0007669"/>
    <property type="project" value="TreeGrafter"/>
</dbReference>
<dbReference type="GO" id="GO:0005829">
    <property type="term" value="C:cytosol"/>
    <property type="evidence" value="ECO:0007669"/>
    <property type="project" value="TreeGrafter"/>
</dbReference>
<dbReference type="GO" id="GO:0005886">
    <property type="term" value="C:plasma membrane"/>
    <property type="evidence" value="ECO:0007669"/>
    <property type="project" value="UniProtKB-SubCell"/>
</dbReference>
<dbReference type="GO" id="GO:0005524">
    <property type="term" value="F:ATP binding"/>
    <property type="evidence" value="ECO:0007669"/>
    <property type="project" value="UniProtKB-UniRule"/>
</dbReference>
<dbReference type="GO" id="GO:0046872">
    <property type="term" value="F:metal ion binding"/>
    <property type="evidence" value="ECO:0007669"/>
    <property type="project" value="UniProtKB-KW"/>
</dbReference>
<dbReference type="GO" id="GO:0008564">
    <property type="term" value="F:protein-exporting ATPase activity"/>
    <property type="evidence" value="ECO:0007669"/>
    <property type="project" value="UniProtKB-EC"/>
</dbReference>
<dbReference type="GO" id="GO:0065002">
    <property type="term" value="P:intracellular protein transmembrane transport"/>
    <property type="evidence" value="ECO:0007669"/>
    <property type="project" value="UniProtKB-UniRule"/>
</dbReference>
<dbReference type="GO" id="GO:0017038">
    <property type="term" value="P:protein import"/>
    <property type="evidence" value="ECO:0007669"/>
    <property type="project" value="InterPro"/>
</dbReference>
<dbReference type="GO" id="GO:0006605">
    <property type="term" value="P:protein targeting"/>
    <property type="evidence" value="ECO:0007669"/>
    <property type="project" value="UniProtKB-UniRule"/>
</dbReference>
<dbReference type="GO" id="GO:0043952">
    <property type="term" value="P:protein transport by the Sec complex"/>
    <property type="evidence" value="ECO:0007669"/>
    <property type="project" value="TreeGrafter"/>
</dbReference>
<dbReference type="CDD" id="cd17928">
    <property type="entry name" value="DEXDc_SecA"/>
    <property type="match status" value="1"/>
</dbReference>
<dbReference type="CDD" id="cd18803">
    <property type="entry name" value="SF2_C_secA"/>
    <property type="match status" value="1"/>
</dbReference>
<dbReference type="FunFam" id="3.40.50.300:FF:000429">
    <property type="entry name" value="Preprotein translocase subunit SecA"/>
    <property type="match status" value="1"/>
</dbReference>
<dbReference type="FunFam" id="3.90.1440.10:FF:000001">
    <property type="entry name" value="Preprotein translocase subunit SecA"/>
    <property type="match status" value="1"/>
</dbReference>
<dbReference type="Gene3D" id="1.10.3060.10">
    <property type="entry name" value="Helical scaffold and wing domains of SecA"/>
    <property type="match status" value="1"/>
</dbReference>
<dbReference type="Gene3D" id="3.40.50.300">
    <property type="entry name" value="P-loop containing nucleotide triphosphate hydrolases"/>
    <property type="match status" value="3"/>
</dbReference>
<dbReference type="Gene3D" id="3.90.1440.10">
    <property type="entry name" value="SecA, preprotein cross-linking domain"/>
    <property type="match status" value="1"/>
</dbReference>
<dbReference type="HAMAP" id="MF_01382">
    <property type="entry name" value="SecA"/>
    <property type="match status" value="1"/>
</dbReference>
<dbReference type="InterPro" id="IPR014001">
    <property type="entry name" value="Helicase_ATP-bd"/>
</dbReference>
<dbReference type="InterPro" id="IPR001650">
    <property type="entry name" value="Helicase_C-like"/>
</dbReference>
<dbReference type="InterPro" id="IPR027417">
    <property type="entry name" value="P-loop_NTPase"/>
</dbReference>
<dbReference type="InterPro" id="IPR004027">
    <property type="entry name" value="SEC_C_motif"/>
</dbReference>
<dbReference type="InterPro" id="IPR000185">
    <property type="entry name" value="SecA"/>
</dbReference>
<dbReference type="InterPro" id="IPR020937">
    <property type="entry name" value="SecA_CS"/>
</dbReference>
<dbReference type="InterPro" id="IPR011115">
    <property type="entry name" value="SecA_DEAD"/>
</dbReference>
<dbReference type="InterPro" id="IPR014018">
    <property type="entry name" value="SecA_motor_DEAD"/>
</dbReference>
<dbReference type="InterPro" id="IPR011130">
    <property type="entry name" value="SecA_preprotein_X-link_dom"/>
</dbReference>
<dbReference type="InterPro" id="IPR044722">
    <property type="entry name" value="SecA_SF2_C"/>
</dbReference>
<dbReference type="InterPro" id="IPR011116">
    <property type="entry name" value="SecA_Wing/Scaffold"/>
</dbReference>
<dbReference type="InterPro" id="IPR036266">
    <property type="entry name" value="SecA_Wing/Scaffold_sf"/>
</dbReference>
<dbReference type="InterPro" id="IPR036670">
    <property type="entry name" value="SecA_X-link_sf"/>
</dbReference>
<dbReference type="NCBIfam" id="NF006630">
    <property type="entry name" value="PRK09200.1"/>
    <property type="match status" value="1"/>
</dbReference>
<dbReference type="NCBIfam" id="NF009538">
    <property type="entry name" value="PRK12904.1"/>
    <property type="match status" value="1"/>
</dbReference>
<dbReference type="NCBIfam" id="TIGR00963">
    <property type="entry name" value="secA"/>
    <property type="match status" value="1"/>
</dbReference>
<dbReference type="PANTHER" id="PTHR30612:SF0">
    <property type="entry name" value="CHLOROPLAST PROTEIN-TRANSPORTING ATPASE"/>
    <property type="match status" value="1"/>
</dbReference>
<dbReference type="PANTHER" id="PTHR30612">
    <property type="entry name" value="SECA INNER MEMBRANE COMPONENT OF SEC PROTEIN SECRETION SYSTEM"/>
    <property type="match status" value="1"/>
</dbReference>
<dbReference type="Pfam" id="PF21090">
    <property type="entry name" value="P-loop_SecA"/>
    <property type="match status" value="2"/>
</dbReference>
<dbReference type="Pfam" id="PF02810">
    <property type="entry name" value="SEC-C"/>
    <property type="match status" value="1"/>
</dbReference>
<dbReference type="Pfam" id="PF07517">
    <property type="entry name" value="SecA_DEAD"/>
    <property type="match status" value="1"/>
</dbReference>
<dbReference type="Pfam" id="PF01043">
    <property type="entry name" value="SecA_PP_bind"/>
    <property type="match status" value="1"/>
</dbReference>
<dbReference type="Pfam" id="PF07516">
    <property type="entry name" value="SecA_SW"/>
    <property type="match status" value="1"/>
</dbReference>
<dbReference type="PRINTS" id="PR00906">
    <property type="entry name" value="SECA"/>
</dbReference>
<dbReference type="SMART" id="SM00957">
    <property type="entry name" value="SecA_DEAD"/>
    <property type="match status" value="1"/>
</dbReference>
<dbReference type="SMART" id="SM00958">
    <property type="entry name" value="SecA_PP_bind"/>
    <property type="match status" value="1"/>
</dbReference>
<dbReference type="SUPFAM" id="SSF81886">
    <property type="entry name" value="Helical scaffold and wing domains of SecA"/>
    <property type="match status" value="1"/>
</dbReference>
<dbReference type="SUPFAM" id="SSF52540">
    <property type="entry name" value="P-loop containing nucleoside triphosphate hydrolases"/>
    <property type="match status" value="2"/>
</dbReference>
<dbReference type="SUPFAM" id="SSF81767">
    <property type="entry name" value="Pre-protein crosslinking domain of SecA"/>
    <property type="match status" value="1"/>
</dbReference>
<dbReference type="PROSITE" id="PS01312">
    <property type="entry name" value="SECA"/>
    <property type="match status" value="1"/>
</dbReference>
<dbReference type="PROSITE" id="PS51196">
    <property type="entry name" value="SECA_MOTOR_DEAD"/>
    <property type="match status" value="1"/>
</dbReference>
<sequence length="865" mass="98169">MPNIIRKLVENDKKELKKLNRMALQVESFADEMEHLTDEQLKAKTPELKERIAKGESLDDLLYEAFAVCREAARRVLGLYPFHVQIMGGIVLHNGDVPEMRTGEGKTLTATMPVYLNALSGKGVHVVTVNEYLATRDMTEMGELYSWLGLTVGLNLNSKSPEEKREAYNCDITYSTSAELGFDYLRDNMVTRAEDMVQKPLNYALVDEVDSILVDEARTPLIISGQAESSSALYYRADQFTKTLKGQNLNVATSEYEEGDDYKIDLQSKTISLTEEGIDKAEKFFQIENLYDMENVALTHFVDNALRANFIMLHDIDYMVDENQEVLIIDQFTGRTMPGRRYSDGLHQAIEAKEAVPIQDESKTMASITIQNYFRMYKKLSGMTGTAKTEEEEFREIYNIQITPIPTNRPVQRLDHPDLLYPTLEAKFKAVIDDIKRRHAEGQPILIGTVAVETSELISKKLVEAKIPHEVLNAKNHFREAQIIMNAGQQGAVTIATNMAGRGTDIKLGPGVIDHVDPEFRGLAVIGTERHESRRIDNQLRGRSGRQGDPGVSQFYLSLEDELMKRFGSERVSAFLDRMRISGEDAVIKSGLITRQIESSQKRVEGNNYDSRKQVLQYDDVIREQREVIYAQRQEVILATEDMTPVLMGMFKRTIDRQVDGHELAGSLKDEENVKNLLQTLHNTMLPEDGIELSELTGLSVQAMKDLIFDKVKARYASQMEKLSDPERQLEFQRAVILRVVDNNWSEHIDALDQMRQSVGLRGYAQNNPIVEYQEESYKMYNNMIGAIEFEVTRLMMKAQIQPQTAIRQEAPRMTTTASQENITNVDTEHSVSEEISFENVGRNDLCPCGSGKKFKNCHGRTHIA</sequence>
<keyword id="KW-0067">ATP-binding</keyword>
<keyword id="KW-1003">Cell membrane</keyword>
<keyword id="KW-0963">Cytoplasm</keyword>
<keyword id="KW-0472">Membrane</keyword>
<keyword id="KW-0479">Metal-binding</keyword>
<keyword id="KW-0547">Nucleotide-binding</keyword>
<keyword id="KW-0653">Protein transport</keyword>
<keyword id="KW-1185">Reference proteome</keyword>
<keyword id="KW-1278">Translocase</keyword>
<keyword id="KW-0811">Translocation</keyword>
<keyword id="KW-0813">Transport</keyword>
<keyword id="KW-0862">Zinc</keyword>
<protein>
    <recommendedName>
        <fullName evidence="1">Protein translocase subunit SecA</fullName>
        <ecNumber evidence="1">7.4.2.8</ecNumber>
    </recommendedName>
</protein>
<reference key="1">
    <citation type="journal article" date="2001" name="Genome Res.">
        <title>The complete genome sequence of the lactic acid bacterium Lactococcus lactis ssp. lactis IL1403.</title>
        <authorList>
            <person name="Bolotin A."/>
            <person name="Wincker P."/>
            <person name="Mauger S."/>
            <person name="Jaillon O."/>
            <person name="Malarme K."/>
            <person name="Weissenbach J."/>
            <person name="Ehrlich S.D."/>
            <person name="Sorokin A."/>
        </authorList>
    </citation>
    <scope>NUCLEOTIDE SEQUENCE [LARGE SCALE GENOMIC DNA]</scope>
    <source>
        <strain>IL1403</strain>
    </source>
</reference>
<feature type="chain" id="PRO_0000320837" description="Protein translocase subunit SecA">
    <location>
        <begin position="1"/>
        <end position="865"/>
    </location>
</feature>
<feature type="binding site" evidence="1">
    <location>
        <position position="85"/>
    </location>
    <ligand>
        <name>ATP</name>
        <dbReference type="ChEBI" id="CHEBI:30616"/>
    </ligand>
</feature>
<feature type="binding site" evidence="1">
    <location>
        <begin position="103"/>
        <end position="107"/>
    </location>
    <ligand>
        <name>ATP</name>
        <dbReference type="ChEBI" id="CHEBI:30616"/>
    </ligand>
</feature>
<feature type="binding site" evidence="1">
    <location>
        <position position="505"/>
    </location>
    <ligand>
        <name>ATP</name>
        <dbReference type="ChEBI" id="CHEBI:30616"/>
    </ligand>
</feature>
<feature type="binding site" evidence="1">
    <location>
        <position position="847"/>
    </location>
    <ligand>
        <name>Zn(2+)</name>
        <dbReference type="ChEBI" id="CHEBI:29105"/>
    </ligand>
</feature>
<feature type="binding site" evidence="1">
    <location>
        <position position="849"/>
    </location>
    <ligand>
        <name>Zn(2+)</name>
        <dbReference type="ChEBI" id="CHEBI:29105"/>
    </ligand>
</feature>
<feature type="binding site" evidence="1">
    <location>
        <position position="858"/>
    </location>
    <ligand>
        <name>Zn(2+)</name>
        <dbReference type="ChEBI" id="CHEBI:29105"/>
    </ligand>
</feature>
<feature type="binding site" evidence="1">
    <location>
        <position position="859"/>
    </location>
    <ligand>
        <name>Zn(2+)</name>
        <dbReference type="ChEBI" id="CHEBI:29105"/>
    </ligand>
</feature>
<name>SECA_LACLA</name>
<proteinExistence type="inferred from homology"/>
<organism>
    <name type="scientific">Lactococcus lactis subsp. lactis (strain IL1403)</name>
    <name type="common">Streptococcus lactis</name>
    <dbReference type="NCBI Taxonomy" id="272623"/>
    <lineage>
        <taxon>Bacteria</taxon>
        <taxon>Bacillati</taxon>
        <taxon>Bacillota</taxon>
        <taxon>Bacilli</taxon>
        <taxon>Lactobacillales</taxon>
        <taxon>Streptococcaceae</taxon>
        <taxon>Lactococcus</taxon>
    </lineage>
</organism>